<evidence type="ECO:0000255" key="1">
    <source>
        <dbReference type="HAMAP-Rule" id="MF_02002"/>
    </source>
</evidence>
<reference key="1">
    <citation type="journal article" date="2011" name="Stand. Genomic Sci.">
        <title>Complete genome sequence of 'Thioalkalivibrio sulfidophilus' HL-EbGr7.</title>
        <authorList>
            <person name="Muyzer G."/>
            <person name="Sorokin D.Y."/>
            <person name="Mavromatis K."/>
            <person name="Lapidus A."/>
            <person name="Clum A."/>
            <person name="Ivanova N."/>
            <person name="Pati A."/>
            <person name="d'Haeseleer P."/>
            <person name="Woyke T."/>
            <person name="Kyrpides N.C."/>
        </authorList>
    </citation>
    <scope>NUCLEOTIDE SEQUENCE [LARGE SCALE GENOMIC DNA]</scope>
    <source>
        <strain>HL-EbGR7</strain>
    </source>
</reference>
<comment type="function">
    <text evidence="1">Catalyzes the attachment of isoleucine to tRNA(Ile). As IleRS can inadvertently accommodate and process structurally similar amino acids such as valine, to avoid such errors it has two additional distinct tRNA(Ile)-dependent editing activities. One activity is designated as 'pretransfer' editing and involves the hydrolysis of activated Val-AMP. The other activity is designated 'posttransfer' editing and involves deacylation of mischarged Val-tRNA(Ile).</text>
</comment>
<comment type="catalytic activity">
    <reaction evidence="1">
        <text>tRNA(Ile) + L-isoleucine + ATP = L-isoleucyl-tRNA(Ile) + AMP + diphosphate</text>
        <dbReference type="Rhea" id="RHEA:11060"/>
        <dbReference type="Rhea" id="RHEA-COMP:9666"/>
        <dbReference type="Rhea" id="RHEA-COMP:9695"/>
        <dbReference type="ChEBI" id="CHEBI:30616"/>
        <dbReference type="ChEBI" id="CHEBI:33019"/>
        <dbReference type="ChEBI" id="CHEBI:58045"/>
        <dbReference type="ChEBI" id="CHEBI:78442"/>
        <dbReference type="ChEBI" id="CHEBI:78528"/>
        <dbReference type="ChEBI" id="CHEBI:456215"/>
        <dbReference type="EC" id="6.1.1.5"/>
    </reaction>
</comment>
<comment type="cofactor">
    <cofactor evidence="1">
        <name>Zn(2+)</name>
        <dbReference type="ChEBI" id="CHEBI:29105"/>
    </cofactor>
    <text evidence="1">Binds 1 zinc ion per subunit.</text>
</comment>
<comment type="subunit">
    <text evidence="1">Monomer.</text>
</comment>
<comment type="subcellular location">
    <subcellularLocation>
        <location evidence="1">Cytoplasm</location>
    </subcellularLocation>
</comment>
<comment type="domain">
    <text evidence="1">IleRS has two distinct active sites: one for aminoacylation and one for editing. The misactivated valine is translocated from the active site to the editing site, which sterically excludes the correctly activated isoleucine. The single editing site contains two valyl binding pockets, one specific for each substrate (Val-AMP or Val-tRNA(Ile)).</text>
</comment>
<comment type="similarity">
    <text evidence="1">Belongs to the class-I aminoacyl-tRNA synthetase family. IleS type 1 subfamily.</text>
</comment>
<name>SYI_THISH</name>
<protein>
    <recommendedName>
        <fullName evidence="1">Isoleucine--tRNA ligase</fullName>
        <ecNumber evidence="1">6.1.1.5</ecNumber>
    </recommendedName>
    <alternativeName>
        <fullName evidence="1">Isoleucyl-tRNA synthetase</fullName>
        <shortName evidence="1">IleRS</shortName>
    </alternativeName>
</protein>
<sequence>MTDYKDTLNLPQTEFPMRGNLAQREPEMLAHWEAAKRYRKLREVCAGRPRFVLADGPPYANGNIHIGHAVNKILKDIIVKSRTLAGFDAAYIPGWDCHGLPIELQVEKKIGKVGHEVDAAAFRKACREYALEQVDSQRQDFKRLGVLGDWEKPYLTMDYQVEADTVRALGRIIERGHLMKGEKPVHWCVDCGSALAEAEVEYEDKTSQAIDVRFRVEDELDLLRRCALDGDGEGPISVVIWTTTPWTLPANQAVCLHPELSYALVRVGDERLLLAEELVEPAMKRYGFSDARIIGRCQGAALEGALLHHPFLDRQVPVILGEHVTLEAGTGCVHTAPGHGQDDYIVGLRYGLAVDNPVGPDGKFLPGTEFFAGESVHQANGHVIEVLRERGALVLAEKLRHSYPHCWRHKTPIIFRATPQWFISMEQAELREQALKAIQQVQWVPQWGQARIEGMVSGRPDWCISRQRNWGVPIPLFVHLETGRLHPDTPALIEAVAQRIEAQGIEAWFSLDPQELLGKDAAAYQKVSDTLDVWFDSGVTHATVTDKRAELGLPADLYLEGSDQHRGWFQSSLLTSVAMRGTAPYKAVLTHGFTVDAQGQKMSKSKGNVVAPQKVVDTLGADILRLWVAATDYSAEMAVSDEILKRTADAYRRMRNTARFLLANLTGFDPARDMLAPGQMLPLDRWAVDQALKVQQKVTGAYEQYQFHQIYQRVHNFCSVELGSFYLDVIKDRQYTTKADSIARRSAQTAMYHIIEAMVRWLAPILSFTAEEIWQEIPGERNESVLFNTWYQGLFALDASEPMNEAFWATLLDVRQAVNREMEKLRAAKASSLDAEVDLYCEPALAETLEGLGEELRFVLITSYARVHGAASRPDDAVETPLEDGTSLWTRVTRSEHAKCPRCWHHREDIGASSDHPELCGRCVENVAGDGEQRRFA</sequence>
<dbReference type="EC" id="6.1.1.5" evidence="1"/>
<dbReference type="EMBL" id="CP001339">
    <property type="protein sequence ID" value="ACL74285.1"/>
    <property type="molecule type" value="Genomic_DNA"/>
</dbReference>
<dbReference type="RefSeq" id="WP_012639747.1">
    <property type="nucleotide sequence ID" value="NC_011901.1"/>
</dbReference>
<dbReference type="SMR" id="B8GQR1"/>
<dbReference type="STRING" id="396588.Tgr7_3216"/>
<dbReference type="KEGG" id="tgr:Tgr7_3216"/>
<dbReference type="eggNOG" id="COG0060">
    <property type="taxonomic scope" value="Bacteria"/>
</dbReference>
<dbReference type="HOGENOM" id="CLU_001493_7_0_6"/>
<dbReference type="OrthoDB" id="9810365at2"/>
<dbReference type="Proteomes" id="UP000002383">
    <property type="component" value="Chromosome"/>
</dbReference>
<dbReference type="GO" id="GO:0005829">
    <property type="term" value="C:cytosol"/>
    <property type="evidence" value="ECO:0007669"/>
    <property type="project" value="TreeGrafter"/>
</dbReference>
<dbReference type="GO" id="GO:0002161">
    <property type="term" value="F:aminoacyl-tRNA deacylase activity"/>
    <property type="evidence" value="ECO:0007669"/>
    <property type="project" value="InterPro"/>
</dbReference>
<dbReference type="GO" id="GO:0005524">
    <property type="term" value="F:ATP binding"/>
    <property type="evidence" value="ECO:0007669"/>
    <property type="project" value="UniProtKB-UniRule"/>
</dbReference>
<dbReference type="GO" id="GO:0004822">
    <property type="term" value="F:isoleucine-tRNA ligase activity"/>
    <property type="evidence" value="ECO:0007669"/>
    <property type="project" value="UniProtKB-UniRule"/>
</dbReference>
<dbReference type="GO" id="GO:0000049">
    <property type="term" value="F:tRNA binding"/>
    <property type="evidence" value="ECO:0007669"/>
    <property type="project" value="InterPro"/>
</dbReference>
<dbReference type="GO" id="GO:0008270">
    <property type="term" value="F:zinc ion binding"/>
    <property type="evidence" value="ECO:0007669"/>
    <property type="project" value="UniProtKB-UniRule"/>
</dbReference>
<dbReference type="GO" id="GO:0006428">
    <property type="term" value="P:isoleucyl-tRNA aminoacylation"/>
    <property type="evidence" value="ECO:0007669"/>
    <property type="project" value="UniProtKB-UniRule"/>
</dbReference>
<dbReference type="CDD" id="cd07960">
    <property type="entry name" value="Anticodon_Ia_Ile_BEm"/>
    <property type="match status" value="1"/>
</dbReference>
<dbReference type="CDD" id="cd00818">
    <property type="entry name" value="IleRS_core"/>
    <property type="match status" value="1"/>
</dbReference>
<dbReference type="FunFam" id="1.10.730.20:FF:000001">
    <property type="entry name" value="Isoleucine--tRNA ligase"/>
    <property type="match status" value="1"/>
</dbReference>
<dbReference type="FunFam" id="3.40.50.620:FF:000042">
    <property type="entry name" value="Isoleucine--tRNA ligase"/>
    <property type="match status" value="1"/>
</dbReference>
<dbReference type="FunFam" id="3.40.50.620:FF:000048">
    <property type="entry name" value="Isoleucine--tRNA ligase"/>
    <property type="match status" value="1"/>
</dbReference>
<dbReference type="Gene3D" id="1.10.730.20">
    <property type="match status" value="1"/>
</dbReference>
<dbReference type="Gene3D" id="3.40.50.620">
    <property type="entry name" value="HUPs"/>
    <property type="match status" value="2"/>
</dbReference>
<dbReference type="Gene3D" id="3.90.740.10">
    <property type="entry name" value="Valyl/Leucyl/Isoleucyl-tRNA synthetase, editing domain"/>
    <property type="match status" value="1"/>
</dbReference>
<dbReference type="HAMAP" id="MF_02002">
    <property type="entry name" value="Ile_tRNA_synth_type1"/>
    <property type="match status" value="1"/>
</dbReference>
<dbReference type="InterPro" id="IPR001412">
    <property type="entry name" value="aa-tRNA-synth_I_CS"/>
</dbReference>
<dbReference type="InterPro" id="IPR002300">
    <property type="entry name" value="aa-tRNA-synth_Ia"/>
</dbReference>
<dbReference type="InterPro" id="IPR033708">
    <property type="entry name" value="Anticodon_Ile_BEm"/>
</dbReference>
<dbReference type="InterPro" id="IPR002301">
    <property type="entry name" value="Ile-tRNA-ligase"/>
</dbReference>
<dbReference type="InterPro" id="IPR023585">
    <property type="entry name" value="Ile-tRNA-ligase_type1"/>
</dbReference>
<dbReference type="InterPro" id="IPR050081">
    <property type="entry name" value="Ile-tRNA_ligase"/>
</dbReference>
<dbReference type="InterPro" id="IPR013155">
    <property type="entry name" value="M/V/L/I-tRNA-synth_anticd-bd"/>
</dbReference>
<dbReference type="InterPro" id="IPR014729">
    <property type="entry name" value="Rossmann-like_a/b/a_fold"/>
</dbReference>
<dbReference type="InterPro" id="IPR009080">
    <property type="entry name" value="tRNAsynth_Ia_anticodon-bd"/>
</dbReference>
<dbReference type="InterPro" id="IPR009008">
    <property type="entry name" value="Val/Leu/Ile-tRNA-synth_edit"/>
</dbReference>
<dbReference type="InterPro" id="IPR010663">
    <property type="entry name" value="Znf_FPG/IleRS"/>
</dbReference>
<dbReference type="NCBIfam" id="TIGR00392">
    <property type="entry name" value="ileS"/>
    <property type="match status" value="1"/>
</dbReference>
<dbReference type="PANTHER" id="PTHR42765:SF1">
    <property type="entry name" value="ISOLEUCINE--TRNA LIGASE, MITOCHONDRIAL"/>
    <property type="match status" value="1"/>
</dbReference>
<dbReference type="PANTHER" id="PTHR42765">
    <property type="entry name" value="SOLEUCYL-TRNA SYNTHETASE"/>
    <property type="match status" value="1"/>
</dbReference>
<dbReference type="Pfam" id="PF08264">
    <property type="entry name" value="Anticodon_1"/>
    <property type="match status" value="1"/>
</dbReference>
<dbReference type="Pfam" id="PF00133">
    <property type="entry name" value="tRNA-synt_1"/>
    <property type="match status" value="1"/>
</dbReference>
<dbReference type="Pfam" id="PF06827">
    <property type="entry name" value="zf-FPG_IleRS"/>
    <property type="match status" value="1"/>
</dbReference>
<dbReference type="PRINTS" id="PR00984">
    <property type="entry name" value="TRNASYNTHILE"/>
</dbReference>
<dbReference type="SUPFAM" id="SSF47323">
    <property type="entry name" value="Anticodon-binding domain of a subclass of class I aminoacyl-tRNA synthetases"/>
    <property type="match status" value="1"/>
</dbReference>
<dbReference type="SUPFAM" id="SSF52374">
    <property type="entry name" value="Nucleotidylyl transferase"/>
    <property type="match status" value="1"/>
</dbReference>
<dbReference type="SUPFAM" id="SSF50677">
    <property type="entry name" value="ValRS/IleRS/LeuRS editing domain"/>
    <property type="match status" value="1"/>
</dbReference>
<dbReference type="PROSITE" id="PS00178">
    <property type="entry name" value="AA_TRNA_LIGASE_I"/>
    <property type="match status" value="1"/>
</dbReference>
<proteinExistence type="inferred from homology"/>
<keyword id="KW-0030">Aminoacyl-tRNA synthetase</keyword>
<keyword id="KW-0067">ATP-binding</keyword>
<keyword id="KW-0963">Cytoplasm</keyword>
<keyword id="KW-0436">Ligase</keyword>
<keyword id="KW-0479">Metal-binding</keyword>
<keyword id="KW-0547">Nucleotide-binding</keyword>
<keyword id="KW-0648">Protein biosynthesis</keyword>
<keyword id="KW-1185">Reference proteome</keyword>
<keyword id="KW-0862">Zinc</keyword>
<accession>B8GQR1</accession>
<feature type="chain" id="PRO_1000189212" description="Isoleucine--tRNA ligase">
    <location>
        <begin position="1"/>
        <end position="937"/>
    </location>
</feature>
<feature type="short sequence motif" description="'HIGH' region">
    <location>
        <begin position="58"/>
        <end position="68"/>
    </location>
</feature>
<feature type="short sequence motif" description="'KMSKS' region">
    <location>
        <begin position="601"/>
        <end position="605"/>
    </location>
</feature>
<feature type="binding site" evidence="1">
    <location>
        <position position="560"/>
    </location>
    <ligand>
        <name>L-isoleucyl-5'-AMP</name>
        <dbReference type="ChEBI" id="CHEBI:178002"/>
    </ligand>
</feature>
<feature type="binding site" evidence="1">
    <location>
        <position position="604"/>
    </location>
    <ligand>
        <name>ATP</name>
        <dbReference type="ChEBI" id="CHEBI:30616"/>
    </ligand>
</feature>
<feature type="binding site" evidence="1">
    <location>
        <position position="900"/>
    </location>
    <ligand>
        <name>Zn(2+)</name>
        <dbReference type="ChEBI" id="CHEBI:29105"/>
    </ligand>
</feature>
<feature type="binding site" evidence="1">
    <location>
        <position position="903"/>
    </location>
    <ligand>
        <name>Zn(2+)</name>
        <dbReference type="ChEBI" id="CHEBI:29105"/>
    </ligand>
</feature>
<feature type="binding site" evidence="1">
    <location>
        <position position="920"/>
    </location>
    <ligand>
        <name>Zn(2+)</name>
        <dbReference type="ChEBI" id="CHEBI:29105"/>
    </ligand>
</feature>
<feature type="binding site" evidence="1">
    <location>
        <position position="923"/>
    </location>
    <ligand>
        <name>Zn(2+)</name>
        <dbReference type="ChEBI" id="CHEBI:29105"/>
    </ligand>
</feature>
<organism>
    <name type="scientific">Thioalkalivibrio sulfidiphilus (strain HL-EbGR7)</name>
    <dbReference type="NCBI Taxonomy" id="396588"/>
    <lineage>
        <taxon>Bacteria</taxon>
        <taxon>Pseudomonadati</taxon>
        <taxon>Pseudomonadota</taxon>
        <taxon>Gammaproteobacteria</taxon>
        <taxon>Chromatiales</taxon>
        <taxon>Ectothiorhodospiraceae</taxon>
        <taxon>Thioalkalivibrio</taxon>
    </lineage>
</organism>
<gene>
    <name evidence="1" type="primary">ileS</name>
    <name type="ordered locus">Tgr7_3216</name>
</gene>